<evidence type="ECO:0000250" key="1">
    <source>
        <dbReference type="UniProtKB" id="M1EBB2"/>
    </source>
</evidence>
<evidence type="ECO:0000305" key="2"/>
<evidence type="ECO:0000305" key="3">
    <source>
    </source>
</evidence>
<organism>
    <name type="scientific">Enterobacteria phage T2</name>
    <name type="common">Bacteriophage T2</name>
    <dbReference type="NCBI Taxonomy" id="2060721"/>
    <lineage>
        <taxon>Viruses</taxon>
        <taxon>Duplodnaviria</taxon>
        <taxon>Heunggongvirae</taxon>
        <taxon>Uroviricota</taxon>
        <taxon>Caudoviricetes</taxon>
        <taxon>Straboviridae</taxon>
        <taxon>Tevenvirinae</taxon>
        <taxon>Tequatrovirus</taxon>
        <taxon>Tequatrovirus T2</taxon>
    </lineage>
</organism>
<protein>
    <recommendedName>
        <fullName evidence="2">Receptor-recognizing protein gp38</fullName>
    </recommendedName>
    <alternativeName>
        <fullName evidence="2">Gene product 38</fullName>
        <shortName evidence="2">gp38</shortName>
    </alternativeName>
    <alternativeName>
        <fullName evidence="2">Long tail fiber adhesin</fullName>
    </alternativeName>
</protein>
<proteinExistence type="inferred from homology"/>
<keyword id="KW-0945">Host-virus interaction</keyword>
<keyword id="KW-1161">Viral attachment to host cell</keyword>
<keyword id="KW-1230">Viral tail fiber protein</keyword>
<keyword id="KW-1227">Viral tail protein</keyword>
<keyword id="KW-0946">Virion</keyword>
<keyword id="KW-1160">Virus entry into host cell</keyword>
<accession>P07875</accession>
<feature type="chain" id="PRO_0000165036" description="Receptor-recognizing protein gp38">
    <location>
        <begin position="1"/>
        <end position="262"/>
    </location>
</feature>
<feature type="short sequence motif" description="GRM 1" evidence="1">
    <location>
        <begin position="116"/>
        <end position="123"/>
    </location>
</feature>
<feature type="short sequence motif" description="GRM 2" evidence="1">
    <location>
        <begin position="126"/>
        <end position="133"/>
    </location>
</feature>
<feature type="short sequence motif" description="GRM 3" evidence="1">
    <location>
        <begin position="153"/>
        <end position="163"/>
    </location>
</feature>
<feature type="short sequence motif" description="GRM 4" evidence="1">
    <location>
        <begin position="166"/>
        <end position="179"/>
    </location>
</feature>
<feature type="short sequence motif" description="GRM 5" evidence="1">
    <location>
        <begin position="182"/>
        <end position="188"/>
    </location>
</feature>
<feature type="short sequence motif" description="GRM 6" evidence="1">
    <location>
        <begin position="193"/>
        <end position="199"/>
    </location>
</feature>
<feature type="short sequence motif" description="GRM 7" evidence="1">
    <location>
        <begin position="201"/>
        <end position="211"/>
    </location>
</feature>
<feature type="short sequence motif" description="GRM 8" evidence="1">
    <location>
        <begin position="213"/>
        <end position="219"/>
    </location>
</feature>
<feature type="short sequence motif" description="GRM 9" evidence="1">
    <location>
        <begin position="222"/>
        <end position="227"/>
    </location>
</feature>
<feature type="short sequence motif" description="GRM 10" evidence="1">
    <location>
        <begin position="229"/>
        <end position="242"/>
    </location>
</feature>
<feature type="site" description="Interaction with the fiber protein p37" evidence="1">
    <location>
        <position position="9"/>
    </location>
</feature>
<feature type="site" description="Interaction with the fiber protein p37" evidence="1">
    <location>
        <position position="22"/>
    </location>
</feature>
<feature type="site" description="Interaction with the fiber protein p37" evidence="1">
    <location>
        <position position="37"/>
    </location>
</feature>
<comment type="function">
    <text evidence="1 3">Receptor binding protein (RBP) that is at the tip of the long tail fibers and serves as the phage recognition site for the attachment host receptor (By similarity). Probably uses the host receptors OmpF and TTR (Probable).</text>
</comment>
<comment type="subcellular location">
    <subcellularLocation>
        <location evidence="1">Virion</location>
    </subcellularLocation>
    <text evidence="1">Forms the distal tip of the long tail fiber.</text>
</comment>
<comment type="domain">
    <text evidence="1">The N-terminus is involved in binding to the fiber protein p37. The C-terminus contains glycine-rich motifs (GRM) and mediates the host specificity. The glycine-rich motifs assemble into a 3-layered PG(II) sandwich domain.</text>
</comment>
<comment type="miscellaneous">
    <text>This phage use outer membrane proteins ompF and TTR as receptors.</text>
</comment>
<comment type="similarity">
    <text evidence="2">Belongs to the receptor-recognizing protein gp38 family.</text>
</comment>
<gene>
    <name type="primary">38</name>
</gene>
<reference key="1">
    <citation type="journal article" date="1987" name="J. Mol. Biol.">
        <title>DNA sequence of genes 38 encoding a receptor-recognizing protein of bacteriophages T2, K3 and of K3 host range mutants.</title>
        <authorList>
            <person name="Riede I."/>
            <person name="Drexler K."/>
            <person name="Eschbach M.L."/>
            <person name="Henning U."/>
        </authorList>
    </citation>
    <scope>NUCLEOTIDE SEQUENCE [GENOMIC DNA]</scope>
</reference>
<reference key="2">
    <citation type="journal article" date="1986" name="J. Bacteriol.">
        <title>New locus (ttr) in Escherichia coli K-12 affecting sensitivity to bacteriophage T2 and growth on oleate as the sole carbon source.</title>
        <authorList>
            <person name="Morona R."/>
            <person name="Henning U."/>
        </authorList>
    </citation>
    <scope>FUNCTION</scope>
</reference>
<dbReference type="EMBL" id="X05312">
    <property type="protein sequence ID" value="CAA28935.1"/>
    <property type="molecule type" value="Genomic_DNA"/>
</dbReference>
<dbReference type="PIR" id="S00275">
    <property type="entry name" value="S00275"/>
</dbReference>
<dbReference type="RefSeq" id="YP_010073898.1">
    <property type="nucleotide sequence ID" value="NC_054931.1"/>
</dbReference>
<dbReference type="SMR" id="P07875"/>
<dbReference type="GeneID" id="65062621"/>
<dbReference type="GO" id="GO:0098024">
    <property type="term" value="C:virus tail, fiber"/>
    <property type="evidence" value="ECO:0007669"/>
    <property type="project" value="UniProtKB-KW"/>
</dbReference>
<dbReference type="GO" id="GO:0098671">
    <property type="term" value="P:adhesion receptor-mediated virion attachment to host cell"/>
    <property type="evidence" value="ECO:0000314"/>
    <property type="project" value="UniProtKB"/>
</dbReference>
<dbReference type="GO" id="GO:0046718">
    <property type="term" value="P:symbiont entry into host cell"/>
    <property type="evidence" value="ECO:0007669"/>
    <property type="project" value="UniProtKB-KW"/>
</dbReference>
<dbReference type="InterPro" id="IPR048291">
    <property type="entry name" value="Gp38_N"/>
</dbReference>
<dbReference type="InterPro" id="IPR007932">
    <property type="entry name" value="Receptor-recog_Gp38"/>
</dbReference>
<dbReference type="Pfam" id="PF05268">
    <property type="entry name" value="GP38"/>
    <property type="match status" value="1"/>
</dbReference>
<dbReference type="Pfam" id="PF21721">
    <property type="entry name" value="Gp38_N"/>
    <property type="match status" value="1"/>
</dbReference>
<name>RBP_BPT2</name>
<sequence length="262" mass="25801">MAIVGVPGWIGESAVNETGQRWMDAAMRAVHVSVPGWMSSMAGQSKEIYLSIGANHNYDRNSLINWMRAQGGAPVVITITGDLVSNSTGNACLEFPSDLPNAYIQLIINSGVTVYGRGGNGSTNSSAGGNGGTAIHNAAGTKLRIRNNGAIAGGGGGGGAASLKNSYPTNGSCGGGGGRPFGVGGKIGSDSILSGSNASLTDAGTGGTTFQYGAGNGGNVGAGGGRGWGKNVYTSEGGAAGAAVTGNAPNWQNVGTIYGSRV</sequence>
<organismHost>
    <name type="scientific">Escherichia coli</name>
    <dbReference type="NCBI Taxonomy" id="562"/>
</organismHost>